<sequence>MTDYPIKYRLIKTEKHTGARLGEIITPHGTFPTPMFMPVGTQATVKTQSPEELKAIGSGIILSNTYHLWLRPGDELIARSGGLHKFMNWDQPILTDSGGFQVYSLADSRNITEEGVTFKNHLNGSKMFLSPEKAISIQNNLGSDIMMSFDECPQFYQPYDYVKKSIERTSRWAERGLKAHRRPHDQGLFGIVQGAGFEDLRRQSAADLVAMDFPGYSIGGLAVGESHEEMNAVLDFTTPLLPENKPRYLMGVGAPDSLIDGVIRGVDMFDCVLPTRIARNGTCMTSEGRLVIKNAKFAEDFTPLDHDCDCYTCQNYSRAYIRHLLKADETFGIRLTSYHNLYFLVNLMKKVRQAIMDDNLLEFRQDFLERYGYNKSNRNF</sequence>
<reference key="1">
    <citation type="journal article" date="2007" name="J. Bacteriol.">
        <title>Complete genome of acute rheumatic fever-associated serotype M5 Streptococcus pyogenes strain Manfredo.</title>
        <authorList>
            <person name="Holden M.T.G."/>
            <person name="Scott A."/>
            <person name="Cherevach I."/>
            <person name="Chillingworth T."/>
            <person name="Churcher C."/>
            <person name="Cronin A."/>
            <person name="Dowd L."/>
            <person name="Feltwell T."/>
            <person name="Hamlin N."/>
            <person name="Holroyd S."/>
            <person name="Jagels K."/>
            <person name="Moule S."/>
            <person name="Mungall K."/>
            <person name="Quail M.A."/>
            <person name="Price C."/>
            <person name="Rabbinowitsch E."/>
            <person name="Sharp S."/>
            <person name="Skelton J."/>
            <person name="Whitehead S."/>
            <person name="Barrell B.G."/>
            <person name="Kehoe M."/>
            <person name="Parkhill J."/>
        </authorList>
    </citation>
    <scope>NUCLEOTIDE SEQUENCE [LARGE SCALE GENOMIC DNA]</scope>
    <source>
        <strain>Manfredo</strain>
    </source>
</reference>
<name>TGT_STRPG</name>
<organism>
    <name type="scientific">Streptococcus pyogenes serotype M5 (strain Manfredo)</name>
    <dbReference type="NCBI Taxonomy" id="160491"/>
    <lineage>
        <taxon>Bacteria</taxon>
        <taxon>Bacillati</taxon>
        <taxon>Bacillota</taxon>
        <taxon>Bacilli</taxon>
        <taxon>Lactobacillales</taxon>
        <taxon>Streptococcaceae</taxon>
        <taxon>Streptococcus</taxon>
    </lineage>
</organism>
<protein>
    <recommendedName>
        <fullName evidence="1">Queuine tRNA-ribosyltransferase</fullName>
        <ecNumber evidence="1">2.4.2.29</ecNumber>
    </recommendedName>
    <alternativeName>
        <fullName evidence="1">Guanine insertion enzyme</fullName>
    </alternativeName>
    <alternativeName>
        <fullName evidence="1">tRNA-guanine transglycosylase</fullName>
    </alternativeName>
</protein>
<accession>A2RCC9</accession>
<comment type="function">
    <text evidence="1">Catalyzes the base-exchange of a guanine (G) residue with the queuine precursor 7-aminomethyl-7-deazaguanine (PreQ1) at position 34 (anticodon wobble position) in tRNAs with GU(N) anticodons (tRNA-Asp, -Asn, -His and -Tyr). Catalysis occurs through a double-displacement mechanism. The nucleophile active site attacks the C1' of nucleotide 34 to detach the guanine base from the RNA, forming a covalent enzyme-RNA intermediate. The proton acceptor active site deprotonates the incoming PreQ1, allowing a nucleophilic attack on the C1' of the ribose to form the product. After dissociation, two additional enzymatic reactions on the tRNA convert PreQ1 to queuine (Q), resulting in the hypermodified nucleoside queuosine (7-(((4,5-cis-dihydroxy-2-cyclopenten-1-yl)amino)methyl)-7-deazaguanosine).</text>
</comment>
<comment type="catalytic activity">
    <reaction evidence="1">
        <text>7-aminomethyl-7-carbaguanine + guanosine(34) in tRNA = 7-aminomethyl-7-carbaguanosine(34) in tRNA + guanine</text>
        <dbReference type="Rhea" id="RHEA:24104"/>
        <dbReference type="Rhea" id="RHEA-COMP:10341"/>
        <dbReference type="Rhea" id="RHEA-COMP:10342"/>
        <dbReference type="ChEBI" id="CHEBI:16235"/>
        <dbReference type="ChEBI" id="CHEBI:58703"/>
        <dbReference type="ChEBI" id="CHEBI:74269"/>
        <dbReference type="ChEBI" id="CHEBI:82833"/>
        <dbReference type="EC" id="2.4.2.29"/>
    </reaction>
</comment>
<comment type="cofactor">
    <cofactor evidence="1">
        <name>Zn(2+)</name>
        <dbReference type="ChEBI" id="CHEBI:29105"/>
    </cofactor>
    <text evidence="1">Binds 1 zinc ion per subunit.</text>
</comment>
<comment type="pathway">
    <text evidence="1">tRNA modification; tRNA-queuosine biosynthesis.</text>
</comment>
<comment type="subunit">
    <text evidence="1">Homodimer. Within each dimer, one monomer is responsible for RNA recognition and catalysis, while the other monomer binds to the replacement base PreQ1.</text>
</comment>
<comment type="similarity">
    <text evidence="1">Belongs to the queuine tRNA-ribosyltransferase family.</text>
</comment>
<gene>
    <name evidence="1" type="primary">tgt</name>
    <name type="ordered locus">SpyM50157</name>
</gene>
<proteinExistence type="inferred from homology"/>
<evidence type="ECO:0000255" key="1">
    <source>
        <dbReference type="HAMAP-Rule" id="MF_00168"/>
    </source>
</evidence>
<keyword id="KW-0328">Glycosyltransferase</keyword>
<keyword id="KW-0479">Metal-binding</keyword>
<keyword id="KW-0671">Queuosine biosynthesis</keyword>
<keyword id="KW-0808">Transferase</keyword>
<keyword id="KW-0819">tRNA processing</keyword>
<keyword id="KW-0862">Zinc</keyword>
<feature type="chain" id="PRO_1000016872" description="Queuine tRNA-ribosyltransferase">
    <location>
        <begin position="1"/>
        <end position="380"/>
    </location>
</feature>
<feature type="region of interest" description="RNA binding" evidence="1">
    <location>
        <begin position="251"/>
        <end position="257"/>
    </location>
</feature>
<feature type="region of interest" description="RNA binding; important for wobble base 34 recognition" evidence="1">
    <location>
        <begin position="275"/>
        <end position="279"/>
    </location>
</feature>
<feature type="active site" description="Proton acceptor" evidence="1">
    <location>
        <position position="96"/>
    </location>
</feature>
<feature type="active site" description="Nucleophile" evidence="1">
    <location>
        <position position="270"/>
    </location>
</feature>
<feature type="binding site" evidence="1">
    <location>
        <begin position="96"/>
        <end position="100"/>
    </location>
    <ligand>
        <name>substrate</name>
    </ligand>
</feature>
<feature type="binding site" evidence="1">
    <location>
        <position position="150"/>
    </location>
    <ligand>
        <name>substrate</name>
    </ligand>
</feature>
<feature type="binding site" evidence="1">
    <location>
        <position position="193"/>
    </location>
    <ligand>
        <name>substrate</name>
    </ligand>
</feature>
<feature type="binding site" evidence="1">
    <location>
        <position position="220"/>
    </location>
    <ligand>
        <name>substrate</name>
    </ligand>
</feature>
<feature type="binding site" evidence="1">
    <location>
        <position position="308"/>
    </location>
    <ligand>
        <name>Zn(2+)</name>
        <dbReference type="ChEBI" id="CHEBI:29105"/>
    </ligand>
</feature>
<feature type="binding site" evidence="1">
    <location>
        <position position="310"/>
    </location>
    <ligand>
        <name>Zn(2+)</name>
        <dbReference type="ChEBI" id="CHEBI:29105"/>
    </ligand>
</feature>
<feature type="binding site" evidence="1">
    <location>
        <position position="313"/>
    </location>
    <ligand>
        <name>Zn(2+)</name>
        <dbReference type="ChEBI" id="CHEBI:29105"/>
    </ligand>
</feature>
<feature type="binding site" evidence="1">
    <location>
        <position position="339"/>
    </location>
    <ligand>
        <name>Zn(2+)</name>
        <dbReference type="ChEBI" id="CHEBI:29105"/>
    </ligand>
</feature>
<dbReference type="EC" id="2.4.2.29" evidence="1"/>
<dbReference type="EMBL" id="AM295007">
    <property type="protein sequence ID" value="CAM29501.1"/>
    <property type="molecule type" value="Genomic_DNA"/>
</dbReference>
<dbReference type="RefSeq" id="WP_002986319.1">
    <property type="nucleotide sequence ID" value="NC_009332.1"/>
</dbReference>
<dbReference type="SMR" id="A2RCC9"/>
<dbReference type="GeneID" id="69900150"/>
<dbReference type="KEGG" id="spf:SpyM50157"/>
<dbReference type="HOGENOM" id="CLU_022060_0_1_9"/>
<dbReference type="UniPathway" id="UPA00392"/>
<dbReference type="GO" id="GO:0005829">
    <property type="term" value="C:cytosol"/>
    <property type="evidence" value="ECO:0007669"/>
    <property type="project" value="TreeGrafter"/>
</dbReference>
<dbReference type="GO" id="GO:0046872">
    <property type="term" value="F:metal ion binding"/>
    <property type="evidence" value="ECO:0007669"/>
    <property type="project" value="UniProtKB-KW"/>
</dbReference>
<dbReference type="GO" id="GO:0008479">
    <property type="term" value="F:tRNA-guanosine(34) queuine transglycosylase activity"/>
    <property type="evidence" value="ECO:0007669"/>
    <property type="project" value="UniProtKB-UniRule"/>
</dbReference>
<dbReference type="GO" id="GO:0008616">
    <property type="term" value="P:queuosine biosynthetic process"/>
    <property type="evidence" value="ECO:0007669"/>
    <property type="project" value="UniProtKB-UniRule"/>
</dbReference>
<dbReference type="GO" id="GO:0002099">
    <property type="term" value="P:tRNA wobble guanine modification"/>
    <property type="evidence" value="ECO:0007669"/>
    <property type="project" value="TreeGrafter"/>
</dbReference>
<dbReference type="GO" id="GO:0101030">
    <property type="term" value="P:tRNA-guanine transglycosylation"/>
    <property type="evidence" value="ECO:0007669"/>
    <property type="project" value="InterPro"/>
</dbReference>
<dbReference type="FunFam" id="3.20.20.105:FF:000001">
    <property type="entry name" value="Queuine tRNA-ribosyltransferase"/>
    <property type="match status" value="1"/>
</dbReference>
<dbReference type="Gene3D" id="3.20.20.105">
    <property type="entry name" value="Queuine tRNA-ribosyltransferase-like"/>
    <property type="match status" value="1"/>
</dbReference>
<dbReference type="HAMAP" id="MF_00168">
    <property type="entry name" value="Q_tRNA_Tgt"/>
    <property type="match status" value="1"/>
</dbReference>
<dbReference type="InterPro" id="IPR050076">
    <property type="entry name" value="ArchSynthase1/Queuine_TRR"/>
</dbReference>
<dbReference type="InterPro" id="IPR004803">
    <property type="entry name" value="TGT"/>
</dbReference>
<dbReference type="InterPro" id="IPR036511">
    <property type="entry name" value="TGT-like_sf"/>
</dbReference>
<dbReference type="InterPro" id="IPR002616">
    <property type="entry name" value="tRNA_ribo_trans-like"/>
</dbReference>
<dbReference type="NCBIfam" id="TIGR00430">
    <property type="entry name" value="Q_tRNA_tgt"/>
    <property type="match status" value="1"/>
</dbReference>
<dbReference type="NCBIfam" id="TIGR00449">
    <property type="entry name" value="tgt_general"/>
    <property type="match status" value="1"/>
</dbReference>
<dbReference type="PANTHER" id="PTHR46499">
    <property type="entry name" value="QUEUINE TRNA-RIBOSYLTRANSFERASE"/>
    <property type="match status" value="1"/>
</dbReference>
<dbReference type="PANTHER" id="PTHR46499:SF1">
    <property type="entry name" value="QUEUINE TRNA-RIBOSYLTRANSFERASE"/>
    <property type="match status" value="1"/>
</dbReference>
<dbReference type="Pfam" id="PF01702">
    <property type="entry name" value="TGT"/>
    <property type="match status" value="1"/>
</dbReference>
<dbReference type="SUPFAM" id="SSF51713">
    <property type="entry name" value="tRNA-guanine transglycosylase"/>
    <property type="match status" value="1"/>
</dbReference>